<feature type="chain" id="PRO_0000152668" description="Lysine--tRNA ligase">
    <location>
        <begin position="1"/>
        <end position="501"/>
    </location>
</feature>
<feature type="binding site" evidence="1">
    <location>
        <position position="411"/>
    </location>
    <ligand>
        <name>Mg(2+)</name>
        <dbReference type="ChEBI" id="CHEBI:18420"/>
        <label>1</label>
    </ligand>
</feature>
<feature type="binding site" evidence="1">
    <location>
        <position position="418"/>
    </location>
    <ligand>
        <name>Mg(2+)</name>
        <dbReference type="ChEBI" id="CHEBI:18420"/>
        <label>1</label>
    </ligand>
</feature>
<feature type="binding site" evidence="1">
    <location>
        <position position="418"/>
    </location>
    <ligand>
        <name>Mg(2+)</name>
        <dbReference type="ChEBI" id="CHEBI:18420"/>
        <label>2</label>
    </ligand>
</feature>
<gene>
    <name evidence="1" type="primary">lysS</name>
    <name type="ordered locus">PA3700</name>
</gene>
<name>SYK_PSEAE</name>
<comment type="catalytic activity">
    <reaction evidence="1">
        <text>tRNA(Lys) + L-lysine + ATP = L-lysyl-tRNA(Lys) + AMP + diphosphate</text>
        <dbReference type="Rhea" id="RHEA:20792"/>
        <dbReference type="Rhea" id="RHEA-COMP:9696"/>
        <dbReference type="Rhea" id="RHEA-COMP:9697"/>
        <dbReference type="ChEBI" id="CHEBI:30616"/>
        <dbReference type="ChEBI" id="CHEBI:32551"/>
        <dbReference type="ChEBI" id="CHEBI:33019"/>
        <dbReference type="ChEBI" id="CHEBI:78442"/>
        <dbReference type="ChEBI" id="CHEBI:78529"/>
        <dbReference type="ChEBI" id="CHEBI:456215"/>
        <dbReference type="EC" id="6.1.1.6"/>
    </reaction>
</comment>
<comment type="cofactor">
    <cofactor evidence="1">
        <name>Mg(2+)</name>
        <dbReference type="ChEBI" id="CHEBI:18420"/>
    </cofactor>
    <text evidence="1">Binds 3 Mg(2+) ions per subunit.</text>
</comment>
<comment type="subunit">
    <text evidence="1">Homodimer.</text>
</comment>
<comment type="subcellular location">
    <subcellularLocation>
        <location evidence="1">Cytoplasm</location>
    </subcellularLocation>
</comment>
<comment type="similarity">
    <text evidence="1">Belongs to the class-II aminoacyl-tRNA synthetase family.</text>
</comment>
<organism>
    <name type="scientific">Pseudomonas aeruginosa (strain ATCC 15692 / DSM 22644 / CIP 104116 / JCM 14847 / LMG 12228 / 1C / PRS 101 / PAO1)</name>
    <dbReference type="NCBI Taxonomy" id="208964"/>
    <lineage>
        <taxon>Bacteria</taxon>
        <taxon>Pseudomonadati</taxon>
        <taxon>Pseudomonadota</taxon>
        <taxon>Gammaproteobacteria</taxon>
        <taxon>Pseudomonadales</taxon>
        <taxon>Pseudomonadaceae</taxon>
        <taxon>Pseudomonas</taxon>
    </lineage>
</organism>
<dbReference type="EC" id="6.1.1.6" evidence="1"/>
<dbReference type="EMBL" id="AE004091">
    <property type="protein sequence ID" value="AAG07088.1"/>
    <property type="molecule type" value="Genomic_DNA"/>
</dbReference>
<dbReference type="PIR" id="D83183">
    <property type="entry name" value="D83183"/>
</dbReference>
<dbReference type="RefSeq" id="NP_252390.1">
    <property type="nucleotide sequence ID" value="NC_002516.2"/>
</dbReference>
<dbReference type="RefSeq" id="WP_003113846.1">
    <property type="nucleotide sequence ID" value="NZ_QZGE01000001.1"/>
</dbReference>
<dbReference type="SMR" id="Q9HXU0"/>
<dbReference type="FunCoup" id="Q9HXU0">
    <property type="interactions" value="843"/>
</dbReference>
<dbReference type="STRING" id="208964.PA3700"/>
<dbReference type="PaxDb" id="208964-PA3700"/>
<dbReference type="GeneID" id="880383"/>
<dbReference type="KEGG" id="pae:PA3700"/>
<dbReference type="PATRIC" id="fig|208964.12.peg.3870"/>
<dbReference type="PseudoCAP" id="PA3700"/>
<dbReference type="HOGENOM" id="CLU_008255_6_0_6"/>
<dbReference type="InParanoid" id="Q9HXU0"/>
<dbReference type="OrthoDB" id="9801152at2"/>
<dbReference type="PhylomeDB" id="Q9HXU0"/>
<dbReference type="BioCyc" id="PAER208964:G1FZ6-3770-MONOMER"/>
<dbReference type="Proteomes" id="UP000002438">
    <property type="component" value="Chromosome"/>
</dbReference>
<dbReference type="GO" id="GO:0005737">
    <property type="term" value="C:cytoplasm"/>
    <property type="evidence" value="ECO:0000318"/>
    <property type="project" value="GO_Central"/>
</dbReference>
<dbReference type="GO" id="GO:0005829">
    <property type="term" value="C:cytosol"/>
    <property type="evidence" value="ECO:0000318"/>
    <property type="project" value="GO_Central"/>
</dbReference>
<dbReference type="GO" id="GO:0005524">
    <property type="term" value="F:ATP binding"/>
    <property type="evidence" value="ECO:0007669"/>
    <property type="project" value="UniProtKB-UniRule"/>
</dbReference>
<dbReference type="GO" id="GO:0004824">
    <property type="term" value="F:lysine-tRNA ligase activity"/>
    <property type="evidence" value="ECO:0000318"/>
    <property type="project" value="GO_Central"/>
</dbReference>
<dbReference type="GO" id="GO:0000287">
    <property type="term" value="F:magnesium ion binding"/>
    <property type="evidence" value="ECO:0007669"/>
    <property type="project" value="UniProtKB-UniRule"/>
</dbReference>
<dbReference type="GO" id="GO:0000049">
    <property type="term" value="F:tRNA binding"/>
    <property type="evidence" value="ECO:0000318"/>
    <property type="project" value="GO_Central"/>
</dbReference>
<dbReference type="GO" id="GO:0006430">
    <property type="term" value="P:lysyl-tRNA aminoacylation"/>
    <property type="evidence" value="ECO:0000318"/>
    <property type="project" value="GO_Central"/>
</dbReference>
<dbReference type="CDD" id="cd00775">
    <property type="entry name" value="LysRS_core"/>
    <property type="match status" value="1"/>
</dbReference>
<dbReference type="CDD" id="cd04322">
    <property type="entry name" value="LysRS_N"/>
    <property type="match status" value="1"/>
</dbReference>
<dbReference type="FunFam" id="2.40.50.140:FF:000024">
    <property type="entry name" value="Lysine--tRNA ligase"/>
    <property type="match status" value="1"/>
</dbReference>
<dbReference type="FunFam" id="3.30.930.10:FF:000001">
    <property type="entry name" value="Lysine--tRNA ligase"/>
    <property type="match status" value="1"/>
</dbReference>
<dbReference type="Gene3D" id="3.30.930.10">
    <property type="entry name" value="Bira Bifunctional Protein, Domain 2"/>
    <property type="match status" value="1"/>
</dbReference>
<dbReference type="Gene3D" id="2.40.50.140">
    <property type="entry name" value="Nucleic acid-binding proteins"/>
    <property type="match status" value="1"/>
</dbReference>
<dbReference type="HAMAP" id="MF_00252">
    <property type="entry name" value="Lys_tRNA_synth_class2"/>
    <property type="match status" value="1"/>
</dbReference>
<dbReference type="InterPro" id="IPR004364">
    <property type="entry name" value="Aa-tRNA-synt_II"/>
</dbReference>
<dbReference type="InterPro" id="IPR006195">
    <property type="entry name" value="aa-tRNA-synth_II"/>
</dbReference>
<dbReference type="InterPro" id="IPR045864">
    <property type="entry name" value="aa-tRNA-synth_II/BPL/LPL"/>
</dbReference>
<dbReference type="InterPro" id="IPR002313">
    <property type="entry name" value="Lys-tRNA-ligase_II"/>
</dbReference>
<dbReference type="InterPro" id="IPR044136">
    <property type="entry name" value="Lys-tRNA-ligase_II_N"/>
</dbReference>
<dbReference type="InterPro" id="IPR018149">
    <property type="entry name" value="Lys-tRNA-synth_II_C"/>
</dbReference>
<dbReference type="InterPro" id="IPR012340">
    <property type="entry name" value="NA-bd_OB-fold"/>
</dbReference>
<dbReference type="InterPro" id="IPR004365">
    <property type="entry name" value="NA-bd_OB_tRNA"/>
</dbReference>
<dbReference type="NCBIfam" id="TIGR00499">
    <property type="entry name" value="lysS_bact"/>
    <property type="match status" value="1"/>
</dbReference>
<dbReference type="NCBIfam" id="NF001756">
    <property type="entry name" value="PRK00484.1"/>
    <property type="match status" value="1"/>
</dbReference>
<dbReference type="PANTHER" id="PTHR42918:SF15">
    <property type="entry name" value="LYSINE--TRNA LIGASE, CHLOROPLASTIC_MITOCHONDRIAL"/>
    <property type="match status" value="1"/>
</dbReference>
<dbReference type="PANTHER" id="PTHR42918">
    <property type="entry name" value="LYSYL-TRNA SYNTHETASE"/>
    <property type="match status" value="1"/>
</dbReference>
<dbReference type="Pfam" id="PF00152">
    <property type="entry name" value="tRNA-synt_2"/>
    <property type="match status" value="1"/>
</dbReference>
<dbReference type="Pfam" id="PF01336">
    <property type="entry name" value="tRNA_anti-codon"/>
    <property type="match status" value="1"/>
</dbReference>
<dbReference type="PRINTS" id="PR00982">
    <property type="entry name" value="TRNASYNTHLYS"/>
</dbReference>
<dbReference type="SUPFAM" id="SSF55681">
    <property type="entry name" value="Class II aaRS and biotin synthetases"/>
    <property type="match status" value="1"/>
</dbReference>
<dbReference type="SUPFAM" id="SSF50249">
    <property type="entry name" value="Nucleic acid-binding proteins"/>
    <property type="match status" value="1"/>
</dbReference>
<dbReference type="PROSITE" id="PS50862">
    <property type="entry name" value="AA_TRNA_LIGASE_II"/>
    <property type="match status" value="1"/>
</dbReference>
<accession>Q9HXU0</accession>
<proteinExistence type="inferred from homology"/>
<protein>
    <recommendedName>
        <fullName evidence="1">Lysine--tRNA ligase</fullName>
        <ecNumber evidence="1">6.1.1.6</ecNumber>
    </recommendedName>
    <alternativeName>
        <fullName evidence="1">Lysyl-tRNA synthetase</fullName>
        <shortName evidence="1">LysRS</shortName>
    </alternativeName>
</protein>
<evidence type="ECO:0000255" key="1">
    <source>
        <dbReference type="HAMAP-Rule" id="MF_00252"/>
    </source>
</evidence>
<keyword id="KW-0030">Aminoacyl-tRNA synthetase</keyword>
<keyword id="KW-0067">ATP-binding</keyword>
<keyword id="KW-0963">Cytoplasm</keyword>
<keyword id="KW-0436">Ligase</keyword>
<keyword id="KW-0460">Magnesium</keyword>
<keyword id="KW-0479">Metal-binding</keyword>
<keyword id="KW-0547">Nucleotide-binding</keyword>
<keyword id="KW-0648">Protein biosynthesis</keyword>
<keyword id="KW-1185">Reference proteome</keyword>
<reference key="1">
    <citation type="journal article" date="2000" name="Nature">
        <title>Complete genome sequence of Pseudomonas aeruginosa PAO1, an opportunistic pathogen.</title>
        <authorList>
            <person name="Stover C.K."/>
            <person name="Pham X.-Q.T."/>
            <person name="Erwin A.L."/>
            <person name="Mizoguchi S.D."/>
            <person name="Warrener P."/>
            <person name="Hickey M.J."/>
            <person name="Brinkman F.S.L."/>
            <person name="Hufnagle W.O."/>
            <person name="Kowalik D.J."/>
            <person name="Lagrou M."/>
            <person name="Garber R.L."/>
            <person name="Goltry L."/>
            <person name="Tolentino E."/>
            <person name="Westbrock-Wadman S."/>
            <person name="Yuan Y."/>
            <person name="Brody L.L."/>
            <person name="Coulter S.N."/>
            <person name="Folger K.R."/>
            <person name="Kas A."/>
            <person name="Larbig K."/>
            <person name="Lim R.M."/>
            <person name="Smith K.A."/>
            <person name="Spencer D.H."/>
            <person name="Wong G.K.-S."/>
            <person name="Wu Z."/>
            <person name="Paulsen I.T."/>
            <person name="Reizer J."/>
            <person name="Saier M.H. Jr."/>
            <person name="Hancock R.E.W."/>
            <person name="Lory S."/>
            <person name="Olson M.V."/>
        </authorList>
    </citation>
    <scope>NUCLEOTIDE SEQUENCE [LARGE SCALE GENOMIC DNA]</scope>
    <source>
        <strain>ATCC 15692 / DSM 22644 / CIP 104116 / JCM 14847 / LMG 12228 / 1C / PRS 101 / PAO1</strain>
    </source>
</reference>
<sequence>MSDQQLDQHELQQEENKLIAQRKEKLAAVREARAIAFPNDFRRDAYFADLQKQYADKTKEELEAAAIPVKVAGRIMLNRGSFIVLQDSSERLQVYVNRKTLPEETLAEIKTWDLGDIIGAEGVLARSGKGDLYVDMTSVRLLTKSLRPLPDKHHGLTDTEQRYRQRYVDLMVNEETRHTFRVRSQVIAHIRRFLSERGFLEVETPMLQTIPGGAAAKPFETHHNALDMAMFLRIAPELYLKRLVVGGFEKVFEINRNFRNEGVSTRHNPEFTMLEFYQAYADYEDNMDLTEELFRELAQSVLGTTDVPYGDKVFHFGEPFVRLSVFDSILKYNPEITAADLNDVEKARAIAKKAGAKVLGHEGLGKLQVMIFEELVEHKLEQPHFITRYPFEVSPLARRNDEDPSVTDRFELFIGGREIANAYSELNDAEDQAERFMLQVKEKDAGDDEAMHYDADFINALEYGMPPTAGEGIGIDRLVMLLTNSPSIRDVILFPHMRPQA</sequence>